<protein>
    <recommendedName>
        <fullName evidence="1">Xanthine-guanine phosphoribosyltransferase</fullName>
        <shortName evidence="1">XGPRT</shortName>
        <ecNumber evidence="1">2.4.2.-</ecNumber>
        <ecNumber evidence="1">2.4.2.22</ecNumber>
    </recommendedName>
    <alternativeName>
        <fullName evidence="1">Xanthine phosphoribosyltransferase</fullName>
    </alternativeName>
</protein>
<organism>
    <name type="scientific">Rhodopseudomonas palustris (strain BisB18)</name>
    <dbReference type="NCBI Taxonomy" id="316056"/>
    <lineage>
        <taxon>Bacteria</taxon>
        <taxon>Pseudomonadati</taxon>
        <taxon>Pseudomonadota</taxon>
        <taxon>Alphaproteobacteria</taxon>
        <taxon>Hyphomicrobiales</taxon>
        <taxon>Nitrobacteraceae</taxon>
        <taxon>Rhodopseudomonas</taxon>
    </lineage>
</organism>
<sequence>MIESVDLNAQERAGRAFPVSWDQFHRDCRALTWRLNEVGPFAAVIAITRGGLVPAAIVARELGVRVIDTVCIASYEHDRQGELQVLKGVSDSTKALGGGTGKGLLIVDDLVDTGATARLVREMLPDAHFATVYAKPKGRPLVDTFITEVSQDTWIFFPWDLALTFQPPMKDGAG</sequence>
<name>XGPT_RHOPB</name>
<gene>
    <name evidence="1" type="primary">gpt</name>
    <name type="ordered locus">RPC_3155</name>
</gene>
<reference key="1">
    <citation type="submission" date="2006-03" db="EMBL/GenBank/DDBJ databases">
        <title>Complete sequence of Rhodopseudomonas palustris BisB18.</title>
        <authorList>
            <consortium name="US DOE Joint Genome Institute"/>
            <person name="Copeland A."/>
            <person name="Lucas S."/>
            <person name="Lapidus A."/>
            <person name="Barry K."/>
            <person name="Detter J.C."/>
            <person name="Glavina del Rio T."/>
            <person name="Hammon N."/>
            <person name="Israni S."/>
            <person name="Dalin E."/>
            <person name="Tice H."/>
            <person name="Pitluck S."/>
            <person name="Chain P."/>
            <person name="Malfatti S."/>
            <person name="Shin M."/>
            <person name="Vergez L."/>
            <person name="Schmutz J."/>
            <person name="Larimer F."/>
            <person name="Land M."/>
            <person name="Hauser L."/>
            <person name="Pelletier D.A."/>
            <person name="Kyrpides N."/>
            <person name="Anderson I."/>
            <person name="Oda Y."/>
            <person name="Harwood C.S."/>
            <person name="Richardson P."/>
        </authorList>
    </citation>
    <scope>NUCLEOTIDE SEQUENCE [LARGE SCALE GENOMIC DNA]</scope>
    <source>
        <strain>BisB18</strain>
    </source>
</reference>
<dbReference type="EC" id="2.4.2.-" evidence="1"/>
<dbReference type="EC" id="2.4.2.22" evidence="1"/>
<dbReference type="EMBL" id="CP000301">
    <property type="protein sequence ID" value="ABD88697.1"/>
    <property type="molecule type" value="Genomic_DNA"/>
</dbReference>
<dbReference type="SMR" id="Q212I9"/>
<dbReference type="STRING" id="316056.RPC_3155"/>
<dbReference type="KEGG" id="rpc:RPC_3155"/>
<dbReference type="eggNOG" id="COG2236">
    <property type="taxonomic scope" value="Bacteria"/>
</dbReference>
<dbReference type="HOGENOM" id="CLU_080904_3_0_5"/>
<dbReference type="OrthoDB" id="9789690at2"/>
<dbReference type="UniPathway" id="UPA00602">
    <property type="reaction ID" value="UER00658"/>
</dbReference>
<dbReference type="UniPathway" id="UPA00909">
    <property type="reaction ID" value="UER00887"/>
</dbReference>
<dbReference type="GO" id="GO:0005886">
    <property type="term" value="C:plasma membrane"/>
    <property type="evidence" value="ECO:0007669"/>
    <property type="project" value="UniProtKB-SubCell"/>
</dbReference>
<dbReference type="GO" id="GO:0052657">
    <property type="term" value="F:guanine phosphoribosyltransferase activity"/>
    <property type="evidence" value="ECO:0007669"/>
    <property type="project" value="RHEA"/>
</dbReference>
<dbReference type="GO" id="GO:0004422">
    <property type="term" value="F:hypoxanthine phosphoribosyltransferase activity"/>
    <property type="evidence" value="ECO:0007669"/>
    <property type="project" value="RHEA"/>
</dbReference>
<dbReference type="GO" id="GO:0000287">
    <property type="term" value="F:magnesium ion binding"/>
    <property type="evidence" value="ECO:0007669"/>
    <property type="project" value="UniProtKB-UniRule"/>
</dbReference>
<dbReference type="GO" id="GO:0000310">
    <property type="term" value="F:xanthine phosphoribosyltransferase activity"/>
    <property type="evidence" value="ECO:0007669"/>
    <property type="project" value="UniProtKB-UniRule"/>
</dbReference>
<dbReference type="GO" id="GO:0032263">
    <property type="term" value="P:GMP salvage"/>
    <property type="evidence" value="ECO:0007669"/>
    <property type="project" value="UniProtKB-UniRule"/>
</dbReference>
<dbReference type="GO" id="GO:0006166">
    <property type="term" value="P:purine ribonucleoside salvage"/>
    <property type="evidence" value="ECO:0007669"/>
    <property type="project" value="UniProtKB-KW"/>
</dbReference>
<dbReference type="GO" id="GO:0032265">
    <property type="term" value="P:XMP salvage"/>
    <property type="evidence" value="ECO:0007669"/>
    <property type="project" value="UniProtKB-UniRule"/>
</dbReference>
<dbReference type="CDD" id="cd06223">
    <property type="entry name" value="PRTases_typeI"/>
    <property type="match status" value="1"/>
</dbReference>
<dbReference type="Gene3D" id="3.40.50.2020">
    <property type="match status" value="1"/>
</dbReference>
<dbReference type="HAMAP" id="MF_01903">
    <property type="entry name" value="XGPRT"/>
    <property type="match status" value="1"/>
</dbReference>
<dbReference type="InterPro" id="IPR000836">
    <property type="entry name" value="PRibTrfase_dom"/>
</dbReference>
<dbReference type="InterPro" id="IPR029057">
    <property type="entry name" value="PRTase-like"/>
</dbReference>
<dbReference type="InterPro" id="IPR023747">
    <property type="entry name" value="Xanthine_Guanine_PRibTrfase"/>
</dbReference>
<dbReference type="NCBIfam" id="NF006613">
    <property type="entry name" value="PRK09177.1"/>
    <property type="match status" value="1"/>
</dbReference>
<dbReference type="PANTHER" id="PTHR39563">
    <property type="entry name" value="XANTHINE PHOSPHORIBOSYLTRANSFERASE"/>
    <property type="match status" value="1"/>
</dbReference>
<dbReference type="PANTHER" id="PTHR39563:SF1">
    <property type="entry name" value="XANTHINE-GUANINE PHOSPHORIBOSYLTRANSFERASE"/>
    <property type="match status" value="1"/>
</dbReference>
<dbReference type="Pfam" id="PF00156">
    <property type="entry name" value="Pribosyltran"/>
    <property type="match status" value="1"/>
</dbReference>
<dbReference type="SUPFAM" id="SSF53271">
    <property type="entry name" value="PRTase-like"/>
    <property type="match status" value="1"/>
</dbReference>
<dbReference type="PROSITE" id="PS00103">
    <property type="entry name" value="PUR_PYR_PR_TRANSFER"/>
    <property type="match status" value="1"/>
</dbReference>
<feature type="chain" id="PRO_0000261015" description="Xanthine-guanine phosphoribosyltransferase">
    <location>
        <begin position="1"/>
        <end position="174"/>
    </location>
</feature>
<feature type="binding site" evidence="1">
    <location>
        <begin position="49"/>
        <end position="50"/>
    </location>
    <ligand>
        <name>5-phospho-alpha-D-ribose 1-diphosphate</name>
        <dbReference type="ChEBI" id="CHEBI:58017"/>
    </ligand>
</feature>
<feature type="binding site" evidence="1">
    <location>
        <begin position="108"/>
        <end position="116"/>
    </location>
    <ligand>
        <name>5-phospho-alpha-D-ribose 1-diphosphate</name>
        <dbReference type="ChEBI" id="CHEBI:58017"/>
    </ligand>
</feature>
<feature type="binding site" evidence="1">
    <location>
        <position position="109"/>
    </location>
    <ligand>
        <name>Mg(2+)</name>
        <dbReference type="ChEBI" id="CHEBI:18420"/>
    </ligand>
</feature>
<feature type="binding site" evidence="1">
    <location>
        <begin position="112"/>
        <end position="116"/>
    </location>
    <ligand>
        <name>GMP</name>
        <dbReference type="ChEBI" id="CHEBI:58115"/>
    </ligand>
</feature>
<feature type="binding site" evidence="1">
    <location>
        <position position="112"/>
    </location>
    <ligand>
        <name>guanine</name>
        <dbReference type="ChEBI" id="CHEBI:16235"/>
    </ligand>
</feature>
<feature type="binding site" evidence="1">
    <location>
        <position position="112"/>
    </location>
    <ligand>
        <name>xanthine</name>
        <dbReference type="ChEBI" id="CHEBI:17712"/>
    </ligand>
</feature>
<feature type="binding site" evidence="1">
    <location>
        <begin position="154"/>
        <end position="155"/>
    </location>
    <ligand>
        <name>GMP</name>
        <dbReference type="ChEBI" id="CHEBI:58115"/>
    </ligand>
</feature>
<feature type="binding site" evidence="1">
    <location>
        <position position="155"/>
    </location>
    <ligand>
        <name>guanine</name>
        <dbReference type="ChEBI" id="CHEBI:16235"/>
    </ligand>
</feature>
<feature type="binding site" evidence="1">
    <location>
        <position position="155"/>
    </location>
    <ligand>
        <name>xanthine</name>
        <dbReference type="ChEBI" id="CHEBI:17712"/>
    </ligand>
</feature>
<accession>Q212I9</accession>
<evidence type="ECO:0000255" key="1">
    <source>
        <dbReference type="HAMAP-Rule" id="MF_01903"/>
    </source>
</evidence>
<proteinExistence type="inferred from homology"/>
<comment type="function">
    <text evidence="1">Purine salvage pathway enzyme that catalyzes the transfer of the ribosyl-5-phosphate group from 5-phospho-alpha-D-ribose 1-diphosphate (PRPP) to the N9 position of the 6-oxopurines guanine and xanthine to form the corresponding ribonucleotides GMP (guanosine 5'-monophosphate) and XMP (xanthosine 5'-monophosphate), with the release of PPi. To a lesser extent, also acts on hypoxanthine.</text>
</comment>
<comment type="catalytic activity">
    <reaction evidence="1">
        <text>GMP + diphosphate = guanine + 5-phospho-alpha-D-ribose 1-diphosphate</text>
        <dbReference type="Rhea" id="RHEA:25424"/>
        <dbReference type="ChEBI" id="CHEBI:16235"/>
        <dbReference type="ChEBI" id="CHEBI:33019"/>
        <dbReference type="ChEBI" id="CHEBI:58017"/>
        <dbReference type="ChEBI" id="CHEBI:58115"/>
    </reaction>
    <physiologicalReaction direction="right-to-left" evidence="1">
        <dbReference type="Rhea" id="RHEA:25426"/>
    </physiologicalReaction>
</comment>
<comment type="catalytic activity">
    <reaction evidence="1">
        <text>XMP + diphosphate = xanthine + 5-phospho-alpha-D-ribose 1-diphosphate</text>
        <dbReference type="Rhea" id="RHEA:10800"/>
        <dbReference type="ChEBI" id="CHEBI:17712"/>
        <dbReference type="ChEBI" id="CHEBI:33019"/>
        <dbReference type="ChEBI" id="CHEBI:57464"/>
        <dbReference type="ChEBI" id="CHEBI:58017"/>
        <dbReference type="EC" id="2.4.2.22"/>
    </reaction>
    <physiologicalReaction direction="right-to-left" evidence="1">
        <dbReference type="Rhea" id="RHEA:10802"/>
    </physiologicalReaction>
</comment>
<comment type="catalytic activity">
    <reaction evidence="1">
        <text>IMP + diphosphate = hypoxanthine + 5-phospho-alpha-D-ribose 1-diphosphate</text>
        <dbReference type="Rhea" id="RHEA:17973"/>
        <dbReference type="ChEBI" id="CHEBI:17368"/>
        <dbReference type="ChEBI" id="CHEBI:33019"/>
        <dbReference type="ChEBI" id="CHEBI:58017"/>
        <dbReference type="ChEBI" id="CHEBI:58053"/>
    </reaction>
    <physiologicalReaction direction="right-to-left" evidence="1">
        <dbReference type="Rhea" id="RHEA:17975"/>
    </physiologicalReaction>
</comment>
<comment type="cofactor">
    <cofactor evidence="1">
        <name>Mg(2+)</name>
        <dbReference type="ChEBI" id="CHEBI:18420"/>
    </cofactor>
</comment>
<comment type="pathway">
    <text evidence="1">Purine metabolism; GMP biosynthesis via salvage pathway; GMP from guanine: step 1/1.</text>
</comment>
<comment type="pathway">
    <text evidence="1">Purine metabolism; XMP biosynthesis via salvage pathway; XMP from xanthine: step 1/1.</text>
</comment>
<comment type="subunit">
    <text evidence="1">Homotetramer.</text>
</comment>
<comment type="subcellular location">
    <subcellularLocation>
        <location evidence="1">Cell inner membrane</location>
        <topology evidence="1">Peripheral membrane protein</topology>
    </subcellularLocation>
</comment>
<comment type="similarity">
    <text evidence="1">Belongs to the purine/pyrimidine phosphoribosyltransferase family. XGPT subfamily.</text>
</comment>
<keyword id="KW-0997">Cell inner membrane</keyword>
<keyword id="KW-1003">Cell membrane</keyword>
<keyword id="KW-0328">Glycosyltransferase</keyword>
<keyword id="KW-0460">Magnesium</keyword>
<keyword id="KW-0472">Membrane</keyword>
<keyword id="KW-0479">Metal-binding</keyword>
<keyword id="KW-0660">Purine salvage</keyword>
<keyword id="KW-0808">Transferase</keyword>